<gene>
    <name type="primary">ZNF449</name>
</gene>
<name>ZN449_GORGO</name>
<dbReference type="EMBL" id="DQ976438">
    <property type="protein sequence ID" value="ABM46621.1"/>
    <property type="molecule type" value="Genomic_DNA"/>
</dbReference>
<dbReference type="RefSeq" id="XP_004064961.1">
    <property type="nucleotide sequence ID" value="XM_004064913.4"/>
</dbReference>
<dbReference type="RefSeq" id="XP_055232016.1">
    <property type="nucleotide sequence ID" value="XM_055376041.1"/>
</dbReference>
<dbReference type="SMR" id="A1YEQ3"/>
<dbReference type="FunCoup" id="A1YEQ3">
    <property type="interactions" value="339"/>
</dbReference>
<dbReference type="STRING" id="9593.ENSGGOP00000000031"/>
<dbReference type="Ensembl" id="ENSGGOT00000000032.3">
    <property type="protein sequence ID" value="ENSGGOP00000000031.2"/>
    <property type="gene ID" value="ENSGGOG00000000032.3"/>
</dbReference>
<dbReference type="GeneID" id="101141177"/>
<dbReference type="CTD" id="203523"/>
<dbReference type="eggNOG" id="KOG1721">
    <property type="taxonomic scope" value="Eukaryota"/>
</dbReference>
<dbReference type="GeneTree" id="ENSGT00940000160108"/>
<dbReference type="HOGENOM" id="CLU_002678_49_8_1"/>
<dbReference type="InParanoid" id="A1YEQ3"/>
<dbReference type="OMA" id="LDMNFPL"/>
<dbReference type="Proteomes" id="UP000001519">
    <property type="component" value="Chromosome X"/>
</dbReference>
<dbReference type="Bgee" id="ENSGGOG00000000032">
    <property type="expression patterns" value="Expressed in liver and 6 other cell types or tissues"/>
</dbReference>
<dbReference type="GO" id="GO:0005634">
    <property type="term" value="C:nucleus"/>
    <property type="evidence" value="ECO:0007669"/>
    <property type="project" value="UniProtKB-SubCell"/>
</dbReference>
<dbReference type="GO" id="GO:0000981">
    <property type="term" value="F:DNA-binding transcription factor activity, RNA polymerase II-specific"/>
    <property type="evidence" value="ECO:0000318"/>
    <property type="project" value="GO_Central"/>
</dbReference>
<dbReference type="GO" id="GO:0000978">
    <property type="term" value="F:RNA polymerase II cis-regulatory region sequence-specific DNA binding"/>
    <property type="evidence" value="ECO:0000318"/>
    <property type="project" value="GO_Central"/>
</dbReference>
<dbReference type="GO" id="GO:0008270">
    <property type="term" value="F:zinc ion binding"/>
    <property type="evidence" value="ECO:0007669"/>
    <property type="project" value="UniProtKB-KW"/>
</dbReference>
<dbReference type="GO" id="GO:0006357">
    <property type="term" value="P:regulation of transcription by RNA polymerase II"/>
    <property type="evidence" value="ECO:0000318"/>
    <property type="project" value="GO_Central"/>
</dbReference>
<dbReference type="CDD" id="cd00065">
    <property type="entry name" value="FYVE_like_SF"/>
    <property type="match status" value="1"/>
</dbReference>
<dbReference type="CDD" id="cd07936">
    <property type="entry name" value="SCAN"/>
    <property type="match status" value="1"/>
</dbReference>
<dbReference type="FunFam" id="3.30.160.60:FF:000467">
    <property type="entry name" value="Zinc finger and SCAN domain-containing 21"/>
    <property type="match status" value="2"/>
</dbReference>
<dbReference type="FunFam" id="3.30.160.60:FF:000869">
    <property type="entry name" value="Zinc finger protein 213"/>
    <property type="match status" value="1"/>
</dbReference>
<dbReference type="FunFam" id="1.10.4020.10:FF:000001">
    <property type="entry name" value="zinc finger protein 263 isoform X1"/>
    <property type="match status" value="1"/>
</dbReference>
<dbReference type="FunFam" id="3.30.160.60:FF:000761">
    <property type="entry name" value="Zinc finger protein 449"/>
    <property type="match status" value="1"/>
</dbReference>
<dbReference type="FunFam" id="3.30.160.60:FF:001562">
    <property type="entry name" value="Zinc finger protein 449"/>
    <property type="match status" value="1"/>
</dbReference>
<dbReference type="FunFam" id="3.30.160.60:FF:000959">
    <property type="entry name" value="zinc finger protein 449"/>
    <property type="match status" value="1"/>
</dbReference>
<dbReference type="FunFam" id="3.30.160.60:FF:000070">
    <property type="entry name" value="zinc finger protein 689 isoform X1"/>
    <property type="match status" value="1"/>
</dbReference>
<dbReference type="Gene3D" id="3.30.160.60">
    <property type="entry name" value="Classic Zinc Finger"/>
    <property type="match status" value="7"/>
</dbReference>
<dbReference type="Gene3D" id="1.10.4020.10">
    <property type="entry name" value="DNA breaking-rejoining enzymes"/>
    <property type="match status" value="1"/>
</dbReference>
<dbReference type="InterPro" id="IPR003309">
    <property type="entry name" value="SCAN_dom"/>
</dbReference>
<dbReference type="InterPro" id="IPR038269">
    <property type="entry name" value="SCAN_sf"/>
</dbReference>
<dbReference type="InterPro" id="IPR036236">
    <property type="entry name" value="Znf_C2H2_sf"/>
</dbReference>
<dbReference type="InterPro" id="IPR013087">
    <property type="entry name" value="Znf_C2H2_type"/>
</dbReference>
<dbReference type="PANTHER" id="PTHR23235">
    <property type="entry name" value="KRUEPPEL-LIKE TRANSCRIPTION FACTOR"/>
    <property type="match status" value="1"/>
</dbReference>
<dbReference type="PANTHER" id="PTHR23235:SF142">
    <property type="entry name" value="ZINC FINGER PROTEIN 384"/>
    <property type="match status" value="1"/>
</dbReference>
<dbReference type="Pfam" id="PF02023">
    <property type="entry name" value="SCAN"/>
    <property type="match status" value="1"/>
</dbReference>
<dbReference type="Pfam" id="PF00096">
    <property type="entry name" value="zf-C2H2"/>
    <property type="match status" value="7"/>
</dbReference>
<dbReference type="SMART" id="SM00431">
    <property type="entry name" value="SCAN"/>
    <property type="match status" value="1"/>
</dbReference>
<dbReference type="SMART" id="SM00355">
    <property type="entry name" value="ZnF_C2H2"/>
    <property type="match status" value="7"/>
</dbReference>
<dbReference type="SUPFAM" id="SSF57667">
    <property type="entry name" value="beta-beta-alpha zinc fingers"/>
    <property type="match status" value="4"/>
</dbReference>
<dbReference type="SUPFAM" id="SSF47353">
    <property type="entry name" value="Retrovirus capsid dimerization domain-like"/>
    <property type="match status" value="1"/>
</dbReference>
<dbReference type="PROSITE" id="PS50804">
    <property type="entry name" value="SCAN_BOX"/>
    <property type="match status" value="1"/>
</dbReference>
<dbReference type="PROSITE" id="PS00028">
    <property type="entry name" value="ZINC_FINGER_C2H2_1"/>
    <property type="match status" value="7"/>
</dbReference>
<dbReference type="PROSITE" id="PS50157">
    <property type="entry name" value="ZINC_FINGER_C2H2_2"/>
    <property type="match status" value="7"/>
</dbReference>
<proteinExistence type="inferred from homology"/>
<comment type="function">
    <text evidence="1">May be involved in transcriptional regulation.</text>
</comment>
<comment type="subcellular location">
    <subcellularLocation>
        <location evidence="3">Nucleus</location>
    </subcellularLocation>
</comment>
<comment type="similarity">
    <text evidence="5">Belongs to the krueppel C2H2-type zinc-finger protein family.</text>
</comment>
<protein>
    <recommendedName>
        <fullName>Zinc finger protein 449</fullName>
    </recommendedName>
</protein>
<organism>
    <name type="scientific">Gorilla gorilla gorilla</name>
    <name type="common">Western lowland gorilla</name>
    <dbReference type="NCBI Taxonomy" id="9595"/>
    <lineage>
        <taxon>Eukaryota</taxon>
        <taxon>Metazoa</taxon>
        <taxon>Chordata</taxon>
        <taxon>Craniata</taxon>
        <taxon>Vertebrata</taxon>
        <taxon>Euteleostomi</taxon>
        <taxon>Mammalia</taxon>
        <taxon>Eutheria</taxon>
        <taxon>Euarchontoglires</taxon>
        <taxon>Primates</taxon>
        <taxon>Haplorrhini</taxon>
        <taxon>Catarrhini</taxon>
        <taxon>Hominidae</taxon>
        <taxon>Gorilla</taxon>
    </lineage>
</organism>
<reference key="1">
    <citation type="submission" date="2006-08" db="EMBL/GenBank/DDBJ databases">
        <title>Positive selection in transcription factor genes on the human lineage.</title>
        <authorList>
            <person name="Nickel G.C."/>
            <person name="Tefft D.L."/>
            <person name="Trevarthen K."/>
            <person name="Funt J."/>
            <person name="Adams M.D."/>
        </authorList>
    </citation>
    <scope>NUCLEOTIDE SEQUENCE [GENOMIC DNA]</scope>
</reference>
<keyword id="KW-0238">DNA-binding</keyword>
<keyword id="KW-0479">Metal-binding</keyword>
<keyword id="KW-0539">Nucleus</keyword>
<keyword id="KW-1185">Reference proteome</keyword>
<keyword id="KW-0677">Repeat</keyword>
<keyword id="KW-0804">Transcription</keyword>
<keyword id="KW-0805">Transcription regulation</keyword>
<keyword id="KW-0862">Zinc</keyword>
<keyword id="KW-0863">Zinc-finger</keyword>
<sequence length="518" mass="59962">MAVALGCAIQASLNQGSVFQEYDTDCEVFRQRFRQFQYREAAGPHEAFNKLWELCCQWLKPKMRSKEQILELLVLEQFLTILPTEIETWVREHCPENRERVVSLIEDLQRELEIPEQQVDMHDMLLEELAPVGTAHIPPTMHLESPALQVMGPAQEAPVTEAWIPQAGPPELNYGATGECQNFLDPGYPLPKLDMNFSLENREEPWVKELQDSKEMKQLLDSKIGFEIGIENEEDTSKQKKMETMYPFIVTLEGNALQGPILQKDYVQLENQWETPPEDLQTDLAKLVDQQNPTLGETPENSNLEEPLNPKPHKKKSPGEKPHRCPQCGKCFARKSQLTGHQRIHSGEEPHKCPECGKRFLRSSDLYRHQRLHTGERPYECTVCKKRFTRRSHLIGHQRTHSEEETYKCLECGKSFCHGSSLKRHLKTHTGEKPHRCHNCGKSFSRLTALTLHQRTHTEERPFKCNYCGKSFRQRPSLVIHLRIHTGEKPYKCTHCSKSFRQRAGLIMHQVTHFRGLI</sequence>
<accession>A1YEQ3</accession>
<feature type="chain" id="PRO_0000285474" description="Zinc finger protein 449">
    <location>
        <begin position="1"/>
        <end position="518"/>
    </location>
</feature>
<feature type="domain" description="SCAN box" evidence="3">
    <location>
        <begin position="30"/>
        <end position="112"/>
    </location>
</feature>
<feature type="zinc finger region" description="C2H2-type 1" evidence="2">
    <location>
        <begin position="323"/>
        <end position="345"/>
    </location>
</feature>
<feature type="zinc finger region" description="C2H2-type 2" evidence="2">
    <location>
        <begin position="351"/>
        <end position="373"/>
    </location>
</feature>
<feature type="zinc finger region" description="C2H2-type 3" evidence="2">
    <location>
        <begin position="379"/>
        <end position="401"/>
    </location>
</feature>
<feature type="zinc finger region" description="C2H2-type 4" evidence="2">
    <location>
        <begin position="407"/>
        <end position="429"/>
    </location>
</feature>
<feature type="zinc finger region" description="C2H2-type 5" evidence="2">
    <location>
        <begin position="435"/>
        <end position="457"/>
    </location>
</feature>
<feature type="zinc finger region" description="C2H2-type 6" evidence="2">
    <location>
        <begin position="463"/>
        <end position="485"/>
    </location>
</feature>
<feature type="zinc finger region" description="C2H2-type 7" evidence="2">
    <location>
        <begin position="491"/>
        <end position="513"/>
    </location>
</feature>
<feature type="region of interest" description="Disordered" evidence="4">
    <location>
        <begin position="292"/>
        <end position="325"/>
    </location>
</feature>
<feature type="compositionally biased region" description="Polar residues" evidence="4">
    <location>
        <begin position="292"/>
        <end position="304"/>
    </location>
</feature>
<evidence type="ECO:0000250" key="1"/>
<evidence type="ECO:0000255" key="2">
    <source>
        <dbReference type="PROSITE-ProRule" id="PRU00042"/>
    </source>
</evidence>
<evidence type="ECO:0000255" key="3">
    <source>
        <dbReference type="PROSITE-ProRule" id="PRU00187"/>
    </source>
</evidence>
<evidence type="ECO:0000256" key="4">
    <source>
        <dbReference type="SAM" id="MobiDB-lite"/>
    </source>
</evidence>
<evidence type="ECO:0000305" key="5"/>